<accession>P14358</accession>
<accession>Q6GZN4</accession>
<name>ICP46_FRG3G</name>
<reference key="1">
    <citation type="journal article" date="1988" name="J. Virol.">
        <title>Structure and regulation of the immediate-early frog virus 3 gene that encodes ICR489.</title>
        <authorList>
            <person name="Beckman W."/>
            <person name="Tham T.N."/>
            <person name="Aubertin A.M."/>
            <person name="Willis D.B."/>
        </authorList>
    </citation>
    <scope>NUCLEOTIDE SEQUENCE [GENOMIC DNA]</scope>
</reference>
<reference key="2">
    <citation type="journal article" date="2004" name="Virology">
        <title>Comparative genomic analyses of frog virus 3, type species of the genus Ranavirus (family Iridoviridae).</title>
        <authorList>
            <person name="Tan W.G."/>
            <person name="Barkman T.J."/>
            <person name="Gregory Chinchar V."/>
            <person name="Essani K."/>
        </authorList>
    </citation>
    <scope>NUCLEOTIDE SEQUENCE [LARGE SCALE GENOMIC DNA]</scope>
</reference>
<keyword id="KW-0244">Early protein</keyword>
<keyword id="KW-1185">Reference proteome</keyword>
<comment type="similarity">
    <text evidence="1">Belongs to the IIV-6 393L family.</text>
</comment>
<comment type="sequence caution" evidence="1">
    <conflict type="erroneous gene model prediction">
        <sequence resource="EMBL-CDS" id="AAA43824"/>
    </conflict>
</comment>
<organismHost>
    <name type="scientific">Dryophytes versicolor</name>
    <name type="common">chameleon treefrog</name>
    <dbReference type="NCBI Taxonomy" id="30343"/>
</organismHost>
<organismHost>
    <name type="scientific">Lithobates pipiens</name>
    <name type="common">Northern leopard frog</name>
    <name type="synonym">Rana pipiens</name>
    <dbReference type="NCBI Taxonomy" id="8404"/>
</organismHost>
<organismHost>
    <name type="scientific">Lithobates sylvaticus</name>
    <name type="common">Wood frog</name>
    <name type="synonym">Rana sylvatica</name>
    <dbReference type="NCBI Taxonomy" id="45438"/>
</organismHost>
<organismHost>
    <name type="scientific">Notophthalmus viridescens</name>
    <name type="common">Eastern newt</name>
    <name type="synonym">Triturus viridescens</name>
    <dbReference type="NCBI Taxonomy" id="8316"/>
</organismHost>
<gene>
    <name type="primary">ICR489</name>
</gene>
<protein>
    <recommendedName>
        <fullName>Immediate-early protein ICP-46</fullName>
    </recommendedName>
</protein>
<organism>
    <name type="scientific">Frog virus 3 (isolate Goorha)</name>
    <name type="common">FV-3</name>
    <dbReference type="NCBI Taxonomy" id="654924"/>
    <lineage>
        <taxon>Viruses</taxon>
        <taxon>Varidnaviria</taxon>
        <taxon>Bamfordvirae</taxon>
        <taxon>Nucleocytoviricota</taxon>
        <taxon>Megaviricetes</taxon>
        <taxon>Pimascovirales</taxon>
        <taxon>Iridoviridae</taxon>
        <taxon>Alphairidovirinae</taxon>
        <taxon>Ranavirus</taxon>
        <taxon>Frog virus 3</taxon>
    </lineage>
</organism>
<proteinExistence type="inferred from homology"/>
<sequence>MANFVTDSRNGLTISCAPQDQSHLHPTIRALVMEGDSVIFRGLPHPDIHREAPPAGLRLKDCLVYDSYEGALVNVFWHGGQWWFCTNKKLSIDRASWSASPGSFKRAFVNCLRKMWRDDRSWADLFDRSYMPSFCDANLDKDLGYVFMVFDPEERIVCSDTEQRLRLLATFDRCTNSHSYECSLTLTCGTEVEVPRPICLKNEREFLLHLRSQDPCRVAGVVLIDALDIHYKILPSEYTKVLDARGEQPRLLNRMFQLMEMGPEGEAHIEVLCRYFSDARVAMERAWDVRERIVQCYLDLTEPDSEPQVWMTRRLMEIVRGCRPGTERTMIDEFLRTMTTGQRKAFYKKHACLAGGDNAWISSDAPIKQAKTVQDLVEFPDDNCQDMDELFVVRA</sequence>
<feature type="chain" id="PRO_0000222388" description="Immediate-early protein ICP-46">
    <location>
        <begin position="1"/>
        <end position="395"/>
    </location>
</feature>
<dbReference type="EMBL" id="M19872">
    <property type="protein sequence ID" value="AAA43824.1"/>
    <property type="status" value="ALT_SEQ"/>
    <property type="molecule type" value="Genomic_DNA"/>
</dbReference>
<dbReference type="EMBL" id="AY548484">
    <property type="protein sequence ID" value="AAT09751.1"/>
    <property type="molecule type" value="Genomic_DNA"/>
</dbReference>
<dbReference type="PIR" id="A29886">
    <property type="entry name" value="EDXFI3"/>
</dbReference>
<dbReference type="RefSeq" id="YP_031670.1">
    <property type="nucleotide sequence ID" value="NC_005946.1"/>
</dbReference>
<dbReference type="KEGG" id="vg:2947810"/>
<dbReference type="Proteomes" id="UP000008770">
    <property type="component" value="Segment"/>
</dbReference>
<evidence type="ECO:0000305" key="1"/>